<organism>
    <name type="scientific">Homo sapiens</name>
    <name type="common">Human</name>
    <dbReference type="NCBI Taxonomy" id="9606"/>
    <lineage>
        <taxon>Eukaryota</taxon>
        <taxon>Metazoa</taxon>
        <taxon>Chordata</taxon>
        <taxon>Craniata</taxon>
        <taxon>Vertebrata</taxon>
        <taxon>Euteleostomi</taxon>
        <taxon>Mammalia</taxon>
        <taxon>Eutheria</taxon>
        <taxon>Euarchontoglires</taxon>
        <taxon>Primates</taxon>
        <taxon>Haplorrhini</taxon>
        <taxon>Catarrhini</taxon>
        <taxon>Hominidae</taxon>
        <taxon>Homo</taxon>
    </lineage>
</organism>
<comment type="function">
    <text>May be involved in transcriptional regulation.</text>
</comment>
<comment type="interaction">
    <interactant intactId="EBI-12302147">
        <id>Q96NJ6</id>
    </interactant>
    <interactant intactId="EBI-716093">
        <id>P13994</id>
        <label>YJU2B</label>
    </interactant>
    <organismsDiffer>false</organismsDiffer>
    <experiments>5</experiments>
</comment>
<comment type="subcellular location">
    <subcellularLocation>
        <location evidence="3">Nucleus</location>
    </subcellularLocation>
</comment>
<comment type="similarity">
    <text evidence="3">Belongs to the krueppel C2H2-type zinc-finger protein family.</text>
</comment>
<name>ZFP3_HUMAN</name>
<gene>
    <name type="primary">ZFP3</name>
    <name type="synonym">ZNF752</name>
</gene>
<keyword id="KW-0238">DNA-binding</keyword>
<keyword id="KW-1017">Isopeptide bond</keyword>
<keyword id="KW-0479">Metal-binding</keyword>
<keyword id="KW-0539">Nucleus</keyword>
<keyword id="KW-1267">Proteomics identification</keyword>
<keyword id="KW-1185">Reference proteome</keyword>
<keyword id="KW-0677">Repeat</keyword>
<keyword id="KW-0804">Transcription</keyword>
<keyword id="KW-0805">Transcription regulation</keyword>
<keyword id="KW-0832">Ubl conjugation</keyword>
<keyword id="KW-0862">Zinc</keyword>
<keyword id="KW-0863">Zinc-finger</keyword>
<reference key="1">
    <citation type="journal article" date="2004" name="Nat. Genet.">
        <title>Complete sequencing and characterization of 21,243 full-length human cDNAs.</title>
        <authorList>
            <person name="Ota T."/>
            <person name="Suzuki Y."/>
            <person name="Nishikawa T."/>
            <person name="Otsuki T."/>
            <person name="Sugiyama T."/>
            <person name="Irie R."/>
            <person name="Wakamatsu A."/>
            <person name="Hayashi K."/>
            <person name="Sato H."/>
            <person name="Nagai K."/>
            <person name="Kimura K."/>
            <person name="Makita H."/>
            <person name="Sekine M."/>
            <person name="Obayashi M."/>
            <person name="Nishi T."/>
            <person name="Shibahara T."/>
            <person name="Tanaka T."/>
            <person name="Ishii S."/>
            <person name="Yamamoto J."/>
            <person name="Saito K."/>
            <person name="Kawai Y."/>
            <person name="Isono Y."/>
            <person name="Nakamura Y."/>
            <person name="Nagahari K."/>
            <person name="Murakami K."/>
            <person name="Yasuda T."/>
            <person name="Iwayanagi T."/>
            <person name="Wagatsuma M."/>
            <person name="Shiratori A."/>
            <person name="Sudo H."/>
            <person name="Hosoiri T."/>
            <person name="Kaku Y."/>
            <person name="Kodaira H."/>
            <person name="Kondo H."/>
            <person name="Sugawara M."/>
            <person name="Takahashi M."/>
            <person name="Kanda K."/>
            <person name="Yokoi T."/>
            <person name="Furuya T."/>
            <person name="Kikkawa E."/>
            <person name="Omura Y."/>
            <person name="Abe K."/>
            <person name="Kamihara K."/>
            <person name="Katsuta N."/>
            <person name="Sato K."/>
            <person name="Tanikawa M."/>
            <person name="Yamazaki M."/>
            <person name="Ninomiya K."/>
            <person name="Ishibashi T."/>
            <person name="Yamashita H."/>
            <person name="Murakawa K."/>
            <person name="Fujimori K."/>
            <person name="Tanai H."/>
            <person name="Kimata M."/>
            <person name="Watanabe M."/>
            <person name="Hiraoka S."/>
            <person name="Chiba Y."/>
            <person name="Ishida S."/>
            <person name="Ono Y."/>
            <person name="Takiguchi S."/>
            <person name="Watanabe S."/>
            <person name="Yosida M."/>
            <person name="Hotuta T."/>
            <person name="Kusano J."/>
            <person name="Kanehori K."/>
            <person name="Takahashi-Fujii A."/>
            <person name="Hara H."/>
            <person name="Tanase T.-O."/>
            <person name="Nomura Y."/>
            <person name="Togiya S."/>
            <person name="Komai F."/>
            <person name="Hara R."/>
            <person name="Takeuchi K."/>
            <person name="Arita M."/>
            <person name="Imose N."/>
            <person name="Musashino K."/>
            <person name="Yuuki H."/>
            <person name="Oshima A."/>
            <person name="Sasaki N."/>
            <person name="Aotsuka S."/>
            <person name="Yoshikawa Y."/>
            <person name="Matsunawa H."/>
            <person name="Ichihara T."/>
            <person name="Shiohata N."/>
            <person name="Sano S."/>
            <person name="Moriya S."/>
            <person name="Momiyama H."/>
            <person name="Satoh N."/>
            <person name="Takami S."/>
            <person name="Terashima Y."/>
            <person name="Suzuki O."/>
            <person name="Nakagawa S."/>
            <person name="Senoh A."/>
            <person name="Mizoguchi H."/>
            <person name="Goto Y."/>
            <person name="Shimizu F."/>
            <person name="Wakebe H."/>
            <person name="Hishigaki H."/>
            <person name="Watanabe T."/>
            <person name="Sugiyama A."/>
            <person name="Takemoto M."/>
            <person name="Kawakami B."/>
            <person name="Yamazaki M."/>
            <person name="Watanabe K."/>
            <person name="Kumagai A."/>
            <person name="Itakura S."/>
            <person name="Fukuzumi Y."/>
            <person name="Fujimori Y."/>
            <person name="Komiyama M."/>
            <person name="Tashiro H."/>
            <person name="Tanigami A."/>
            <person name="Fujiwara T."/>
            <person name="Ono T."/>
            <person name="Yamada K."/>
            <person name="Fujii Y."/>
            <person name="Ozaki K."/>
            <person name="Hirao M."/>
            <person name="Ohmori Y."/>
            <person name="Kawabata A."/>
            <person name="Hikiji T."/>
            <person name="Kobatake N."/>
            <person name="Inagaki H."/>
            <person name="Ikema Y."/>
            <person name="Okamoto S."/>
            <person name="Okitani R."/>
            <person name="Kawakami T."/>
            <person name="Noguchi S."/>
            <person name="Itoh T."/>
            <person name="Shigeta K."/>
            <person name="Senba T."/>
            <person name="Matsumura K."/>
            <person name="Nakajima Y."/>
            <person name="Mizuno T."/>
            <person name="Morinaga M."/>
            <person name="Sasaki M."/>
            <person name="Togashi T."/>
            <person name="Oyama M."/>
            <person name="Hata H."/>
            <person name="Watanabe M."/>
            <person name="Komatsu T."/>
            <person name="Mizushima-Sugano J."/>
            <person name="Satoh T."/>
            <person name="Shirai Y."/>
            <person name="Takahashi Y."/>
            <person name="Nakagawa K."/>
            <person name="Okumura K."/>
            <person name="Nagase T."/>
            <person name="Nomura N."/>
            <person name="Kikuchi H."/>
            <person name="Masuho Y."/>
            <person name="Yamashita R."/>
            <person name="Nakai K."/>
            <person name="Yada T."/>
            <person name="Nakamura Y."/>
            <person name="Ohara O."/>
            <person name="Isogai T."/>
            <person name="Sugano S."/>
        </authorList>
    </citation>
    <scope>NUCLEOTIDE SEQUENCE [LARGE SCALE MRNA]</scope>
    <source>
        <tissue>Brain</tissue>
    </source>
</reference>
<reference key="2">
    <citation type="submission" date="2005-09" db="EMBL/GenBank/DDBJ databases">
        <authorList>
            <person name="Mural R.J."/>
            <person name="Istrail S."/>
            <person name="Sutton G.G."/>
            <person name="Florea L."/>
            <person name="Halpern A.L."/>
            <person name="Mobarry C.M."/>
            <person name="Lippert R."/>
            <person name="Walenz B."/>
            <person name="Shatkay H."/>
            <person name="Dew I."/>
            <person name="Miller J.R."/>
            <person name="Flanigan M.J."/>
            <person name="Edwards N.J."/>
            <person name="Bolanos R."/>
            <person name="Fasulo D."/>
            <person name="Halldorsson B.V."/>
            <person name="Hannenhalli S."/>
            <person name="Turner R."/>
            <person name="Yooseph S."/>
            <person name="Lu F."/>
            <person name="Nusskern D.R."/>
            <person name="Shue B.C."/>
            <person name="Zheng X.H."/>
            <person name="Zhong F."/>
            <person name="Delcher A.L."/>
            <person name="Huson D.H."/>
            <person name="Kravitz S.A."/>
            <person name="Mouchard L."/>
            <person name="Reinert K."/>
            <person name="Remington K.A."/>
            <person name="Clark A.G."/>
            <person name="Waterman M.S."/>
            <person name="Eichler E.E."/>
            <person name="Adams M.D."/>
            <person name="Hunkapiller M.W."/>
            <person name="Myers E.W."/>
            <person name="Venter J.C."/>
        </authorList>
    </citation>
    <scope>NUCLEOTIDE SEQUENCE [LARGE SCALE GENOMIC DNA]</scope>
</reference>
<reference key="3">
    <citation type="journal article" date="2004" name="Genome Res.">
        <title>The status, quality, and expansion of the NIH full-length cDNA project: the Mammalian Gene Collection (MGC).</title>
        <authorList>
            <consortium name="The MGC Project Team"/>
        </authorList>
    </citation>
    <scope>NUCLEOTIDE SEQUENCE [LARGE SCALE MRNA]</scope>
</reference>
<reference key="4">
    <citation type="journal article" date="2017" name="Nat. Struct. Mol. Biol.">
        <title>Site-specific mapping of the human SUMO proteome reveals co-modification with phosphorylation.</title>
        <authorList>
            <person name="Hendriks I.A."/>
            <person name="Lyon D."/>
            <person name="Young C."/>
            <person name="Jensen L.J."/>
            <person name="Vertegaal A.C."/>
            <person name="Nielsen M.L."/>
        </authorList>
    </citation>
    <scope>SUMOYLATION [LARGE SCALE ANALYSIS] AT LYS-6 AND LYS-11</scope>
    <scope>IDENTIFICATION BY MASS SPECTROMETRY [LARGE SCALE ANALYSIS]</scope>
</reference>
<accession>Q96NJ6</accession>
<accession>A5PLL4</accession>
<proteinExistence type="evidence at protein level"/>
<evidence type="ECO:0000255" key="1">
    <source>
        <dbReference type="PROSITE-ProRule" id="PRU00042"/>
    </source>
</evidence>
<evidence type="ECO:0000256" key="2">
    <source>
        <dbReference type="SAM" id="MobiDB-lite"/>
    </source>
</evidence>
<evidence type="ECO:0000305" key="3"/>
<evidence type="ECO:0007744" key="4">
    <source>
    </source>
</evidence>
<protein>
    <recommendedName>
        <fullName>Zinc finger protein 3 homolog</fullName>
        <shortName>Zfp-3</shortName>
    </recommendedName>
    <alternativeName>
        <fullName>Zinc finger protein 752</fullName>
    </alternativeName>
</protein>
<dbReference type="EMBL" id="AK055288">
    <property type="protein sequence ID" value="BAB70898.1"/>
    <property type="molecule type" value="mRNA"/>
</dbReference>
<dbReference type="EMBL" id="CH471108">
    <property type="protein sequence ID" value="EAW90362.1"/>
    <property type="molecule type" value="Genomic_DNA"/>
</dbReference>
<dbReference type="EMBL" id="BC142962">
    <property type="protein sequence ID" value="AAI42963.1"/>
    <property type="molecule type" value="mRNA"/>
</dbReference>
<dbReference type="CCDS" id="CCDS11067.1"/>
<dbReference type="RefSeq" id="NP_694563.1">
    <property type="nucleotide sequence ID" value="NM_153018.3"/>
</dbReference>
<dbReference type="SMR" id="Q96NJ6"/>
<dbReference type="BioGRID" id="125904">
    <property type="interactions" value="4"/>
</dbReference>
<dbReference type="FunCoup" id="Q96NJ6">
    <property type="interactions" value="72"/>
</dbReference>
<dbReference type="IntAct" id="Q96NJ6">
    <property type="interactions" value="2"/>
</dbReference>
<dbReference type="STRING" id="9606.ENSP00000320347"/>
<dbReference type="GlyGen" id="Q96NJ6">
    <property type="glycosylation" value="1 site, 1 O-linked glycan (1 site)"/>
</dbReference>
<dbReference type="iPTMnet" id="Q96NJ6"/>
<dbReference type="PhosphoSitePlus" id="Q96NJ6"/>
<dbReference type="BioMuta" id="ZFP3"/>
<dbReference type="DMDM" id="74761006"/>
<dbReference type="jPOST" id="Q96NJ6"/>
<dbReference type="MassIVE" id="Q96NJ6"/>
<dbReference type="PaxDb" id="9606-ENSP00000320347"/>
<dbReference type="PeptideAtlas" id="Q96NJ6"/>
<dbReference type="ProteomicsDB" id="77523"/>
<dbReference type="Antibodypedia" id="23592">
    <property type="antibodies" value="39 antibodies from 13 providers"/>
</dbReference>
<dbReference type="DNASU" id="124961"/>
<dbReference type="Ensembl" id="ENST00000318833.4">
    <property type="protein sequence ID" value="ENSP00000320347.3"/>
    <property type="gene ID" value="ENSG00000180787.6"/>
</dbReference>
<dbReference type="GeneID" id="124961"/>
<dbReference type="KEGG" id="hsa:124961"/>
<dbReference type="MANE-Select" id="ENST00000318833.4">
    <property type="protein sequence ID" value="ENSP00000320347.3"/>
    <property type="RefSeq nucleotide sequence ID" value="NM_153018.3"/>
    <property type="RefSeq protein sequence ID" value="NP_694563.1"/>
</dbReference>
<dbReference type="UCSC" id="uc002gaq.4">
    <property type="organism name" value="human"/>
</dbReference>
<dbReference type="AGR" id="HGNC:12861"/>
<dbReference type="CTD" id="124961"/>
<dbReference type="DisGeNET" id="124961"/>
<dbReference type="GeneCards" id="ZFP3"/>
<dbReference type="HGNC" id="HGNC:12861">
    <property type="gene designation" value="ZFP3"/>
</dbReference>
<dbReference type="HPA" id="ENSG00000180787">
    <property type="expression patterns" value="Low tissue specificity"/>
</dbReference>
<dbReference type="MIM" id="194480">
    <property type="type" value="gene"/>
</dbReference>
<dbReference type="neXtProt" id="NX_Q96NJ6"/>
<dbReference type="OpenTargets" id="ENSG00000180787"/>
<dbReference type="PharmGKB" id="PA37450"/>
<dbReference type="VEuPathDB" id="HostDB:ENSG00000180787"/>
<dbReference type="eggNOG" id="KOG1721">
    <property type="taxonomic scope" value="Eukaryota"/>
</dbReference>
<dbReference type="GeneTree" id="ENSGT00940000162652"/>
<dbReference type="HOGENOM" id="CLU_002678_52_2_1"/>
<dbReference type="InParanoid" id="Q96NJ6"/>
<dbReference type="OMA" id="YHECSEC"/>
<dbReference type="OrthoDB" id="6591996at2759"/>
<dbReference type="PAN-GO" id="Q96NJ6">
    <property type="GO annotations" value="3 GO annotations based on evolutionary models"/>
</dbReference>
<dbReference type="PhylomeDB" id="Q96NJ6"/>
<dbReference type="TreeFam" id="TF337005"/>
<dbReference type="PathwayCommons" id="Q96NJ6"/>
<dbReference type="SignaLink" id="Q96NJ6"/>
<dbReference type="BioGRID-ORCS" id="124961">
    <property type="hits" value="8 hits in 1177 CRISPR screens"/>
</dbReference>
<dbReference type="ChiTaRS" id="ZFP3">
    <property type="organism name" value="human"/>
</dbReference>
<dbReference type="GenomeRNAi" id="124961"/>
<dbReference type="Pharos" id="Q96NJ6">
    <property type="development level" value="Tdark"/>
</dbReference>
<dbReference type="PRO" id="PR:Q96NJ6"/>
<dbReference type="Proteomes" id="UP000005640">
    <property type="component" value="Chromosome 17"/>
</dbReference>
<dbReference type="RNAct" id="Q96NJ6">
    <property type="molecule type" value="protein"/>
</dbReference>
<dbReference type="Bgee" id="ENSG00000180787">
    <property type="expression patterns" value="Expressed in cardiac muscle of right atrium and 162 other cell types or tissues"/>
</dbReference>
<dbReference type="GO" id="GO:0005634">
    <property type="term" value="C:nucleus"/>
    <property type="evidence" value="ECO:0000318"/>
    <property type="project" value="GO_Central"/>
</dbReference>
<dbReference type="GO" id="GO:0000981">
    <property type="term" value="F:DNA-binding transcription factor activity, RNA polymerase II-specific"/>
    <property type="evidence" value="ECO:0000318"/>
    <property type="project" value="GO_Central"/>
</dbReference>
<dbReference type="GO" id="GO:0000977">
    <property type="term" value="F:RNA polymerase II transcription regulatory region sequence-specific DNA binding"/>
    <property type="evidence" value="ECO:0000318"/>
    <property type="project" value="GO_Central"/>
</dbReference>
<dbReference type="GO" id="GO:0008270">
    <property type="term" value="F:zinc ion binding"/>
    <property type="evidence" value="ECO:0007669"/>
    <property type="project" value="UniProtKB-KW"/>
</dbReference>
<dbReference type="GO" id="GO:0006357">
    <property type="term" value="P:regulation of transcription by RNA polymerase II"/>
    <property type="evidence" value="ECO:0000318"/>
    <property type="project" value="GO_Central"/>
</dbReference>
<dbReference type="FunFam" id="3.30.160.60:FF:001738">
    <property type="entry name" value="ZFP3 zinc finger protein"/>
    <property type="match status" value="1"/>
</dbReference>
<dbReference type="FunFam" id="3.30.160.60:FF:000478">
    <property type="entry name" value="Zinc finger protein 133"/>
    <property type="match status" value="1"/>
</dbReference>
<dbReference type="FunFam" id="3.30.160.60:FF:000295">
    <property type="entry name" value="zinc finger protein 19"/>
    <property type="match status" value="2"/>
</dbReference>
<dbReference type="FunFam" id="3.30.160.60:FF:000027">
    <property type="entry name" value="zinc finger protein 3 homolog"/>
    <property type="match status" value="1"/>
</dbReference>
<dbReference type="FunFam" id="3.30.160.60:FF:000352">
    <property type="entry name" value="zinc finger protein 3 homolog"/>
    <property type="match status" value="1"/>
</dbReference>
<dbReference type="FunFam" id="3.30.160.60:FF:001121">
    <property type="entry name" value="zinc finger protein 3 homolog"/>
    <property type="match status" value="1"/>
</dbReference>
<dbReference type="FunFam" id="3.30.160.60:FF:001542">
    <property type="entry name" value="zinc finger protein 3 homolog"/>
    <property type="match status" value="1"/>
</dbReference>
<dbReference type="FunFam" id="3.30.160.60:FF:000016">
    <property type="entry name" value="zinc finger protein 37 homolog"/>
    <property type="match status" value="1"/>
</dbReference>
<dbReference type="FunFam" id="3.30.160.60:FF:002254">
    <property type="entry name" value="Zinc finger protein 540"/>
    <property type="match status" value="1"/>
</dbReference>
<dbReference type="FunFam" id="3.30.160.60:FF:000737">
    <property type="entry name" value="Zinc finger protein 565"/>
    <property type="match status" value="2"/>
</dbReference>
<dbReference type="FunFam" id="3.30.160.60:FF:001697">
    <property type="entry name" value="zinc finger protein 623"/>
    <property type="match status" value="1"/>
</dbReference>
<dbReference type="Gene3D" id="3.30.160.60">
    <property type="entry name" value="Classic Zinc Finger"/>
    <property type="match status" value="13"/>
</dbReference>
<dbReference type="InterPro" id="IPR050888">
    <property type="entry name" value="ZnF_C2H2-type_TF"/>
</dbReference>
<dbReference type="InterPro" id="IPR036236">
    <property type="entry name" value="Znf_C2H2_sf"/>
</dbReference>
<dbReference type="InterPro" id="IPR013087">
    <property type="entry name" value="Znf_C2H2_type"/>
</dbReference>
<dbReference type="PANTHER" id="PTHR24406">
    <property type="entry name" value="TRANSCRIPTIONAL REPRESSOR CTCFL-RELATED"/>
    <property type="match status" value="1"/>
</dbReference>
<dbReference type="Pfam" id="PF00096">
    <property type="entry name" value="zf-C2H2"/>
    <property type="match status" value="12"/>
</dbReference>
<dbReference type="SMART" id="SM00355">
    <property type="entry name" value="ZnF_C2H2"/>
    <property type="match status" value="13"/>
</dbReference>
<dbReference type="SUPFAM" id="SSF57667">
    <property type="entry name" value="beta-beta-alpha zinc fingers"/>
    <property type="match status" value="7"/>
</dbReference>
<dbReference type="PROSITE" id="PS00028">
    <property type="entry name" value="ZINC_FINGER_C2H2_1"/>
    <property type="match status" value="13"/>
</dbReference>
<dbReference type="PROSITE" id="PS50157">
    <property type="entry name" value="ZINC_FINGER_C2H2_2"/>
    <property type="match status" value="13"/>
</dbReference>
<feature type="chain" id="PRO_0000233713" description="Zinc finger protein 3 homolog">
    <location>
        <begin position="1"/>
        <end position="502"/>
    </location>
</feature>
<feature type="zinc finger region" description="C2H2-type 1" evidence="1">
    <location>
        <begin position="141"/>
        <end position="163"/>
    </location>
</feature>
<feature type="zinc finger region" description="C2H2-type 2" evidence="1">
    <location>
        <begin position="169"/>
        <end position="191"/>
    </location>
</feature>
<feature type="zinc finger region" description="C2H2-type 3" evidence="1">
    <location>
        <begin position="197"/>
        <end position="219"/>
    </location>
</feature>
<feature type="zinc finger region" description="C2H2-type 4" evidence="1">
    <location>
        <begin position="225"/>
        <end position="247"/>
    </location>
</feature>
<feature type="zinc finger region" description="C2H2-type 5" evidence="1">
    <location>
        <begin position="253"/>
        <end position="275"/>
    </location>
</feature>
<feature type="zinc finger region" description="C2H2-type 6" evidence="1">
    <location>
        <begin position="281"/>
        <end position="303"/>
    </location>
</feature>
<feature type="zinc finger region" description="C2H2-type 7" evidence="1">
    <location>
        <begin position="309"/>
        <end position="331"/>
    </location>
</feature>
<feature type="zinc finger region" description="C2H2-type 8" evidence="1">
    <location>
        <begin position="337"/>
        <end position="359"/>
    </location>
</feature>
<feature type="zinc finger region" description="C2H2-type 9" evidence="1">
    <location>
        <begin position="365"/>
        <end position="387"/>
    </location>
</feature>
<feature type="zinc finger region" description="C2H2-type 10" evidence="1">
    <location>
        <begin position="393"/>
        <end position="415"/>
    </location>
</feature>
<feature type="zinc finger region" description="C2H2-type 11" evidence="1">
    <location>
        <begin position="421"/>
        <end position="443"/>
    </location>
</feature>
<feature type="zinc finger region" description="C2H2-type 12" evidence="1">
    <location>
        <begin position="449"/>
        <end position="471"/>
    </location>
</feature>
<feature type="zinc finger region" description="C2H2-type 13" evidence="1">
    <location>
        <begin position="477"/>
        <end position="499"/>
    </location>
</feature>
<feature type="region of interest" description="Disordered" evidence="2">
    <location>
        <begin position="1"/>
        <end position="26"/>
    </location>
</feature>
<feature type="region of interest" description="Disordered" evidence="2">
    <location>
        <begin position="47"/>
        <end position="103"/>
    </location>
</feature>
<feature type="compositionally biased region" description="Basic and acidic residues" evidence="2">
    <location>
        <begin position="1"/>
        <end position="13"/>
    </location>
</feature>
<feature type="compositionally biased region" description="Basic and acidic residues" evidence="2">
    <location>
        <begin position="80"/>
        <end position="93"/>
    </location>
</feature>
<feature type="cross-link" description="Glycyl lysine isopeptide (Lys-Gly) (interchain with G-Cter in SUMO2)" evidence="4">
    <location>
        <position position="6"/>
    </location>
</feature>
<feature type="cross-link" description="Glycyl lysine isopeptide (Lys-Gly) (interchain with G-Cter in SUMO2)" evidence="4">
    <location>
        <position position="11"/>
    </location>
</feature>
<sequence>MGTENKEVIPKEEISEESEPHGSLLEKFPKVVYQGHEFGAGCEEDMLEGHSRESMEEVIEQMSPQERDFPSGLMIFKKSPSSEKDRENNESERGCSPSPNLVTHQGDTTEGVSAFATSGQNFLEILESNKTQRSSVGEKPHTCKECGKAFNQNSHLIQHMRVHSGEKPFECKECGKTFGTNSSLRRHLRIHAGEKPFACNECGKAFIQSSHLIHHHRIHTGERPYKCEECGKAFSQNSALILHQRIHTGEKPYECNECGKTFRVSSQLIQHQRIHTEERYHECNECGKAFKHSSGLIRHQKIHTGEKPYLCNECGKGFGQSSELIRHQRIHTGDKPYECNECGKTFGQNSEIIRHIRIHTGEKPYVCKECGKAFRGNSELLRHERIHTGEKPYECFECGKAFRRTSHLIVHQRIHTGEKPHQCNECARTFWDNSELLLHQKIHIGEKPYECSECEKTFSQHSQLIIHQRIHTGEKPYECQECQKTFSRSSHLLRHQSVHCME</sequence>